<gene>
    <name evidence="1" type="primary">menD</name>
    <name type="ordered locus">SNSL254_A2494</name>
</gene>
<keyword id="KW-0460">Magnesium</keyword>
<keyword id="KW-0464">Manganese</keyword>
<keyword id="KW-0474">Menaquinone biosynthesis</keyword>
<keyword id="KW-0479">Metal-binding</keyword>
<keyword id="KW-0786">Thiamine pyrophosphate</keyword>
<keyword id="KW-0808">Transferase</keyword>
<reference key="1">
    <citation type="journal article" date="2011" name="J. Bacteriol.">
        <title>Comparative genomics of 28 Salmonella enterica isolates: evidence for CRISPR-mediated adaptive sublineage evolution.</title>
        <authorList>
            <person name="Fricke W.F."/>
            <person name="Mammel M.K."/>
            <person name="McDermott P.F."/>
            <person name="Tartera C."/>
            <person name="White D.G."/>
            <person name="Leclerc J.E."/>
            <person name="Ravel J."/>
            <person name="Cebula T.A."/>
        </authorList>
    </citation>
    <scope>NUCLEOTIDE SEQUENCE [LARGE SCALE GENOMIC DNA]</scope>
    <source>
        <strain>SL254</strain>
    </source>
</reference>
<evidence type="ECO:0000255" key="1">
    <source>
        <dbReference type="HAMAP-Rule" id="MF_01659"/>
    </source>
</evidence>
<proteinExistence type="inferred from homology"/>
<feature type="chain" id="PRO_1000187093" description="2-succinyl-5-enolpyruvyl-6-hydroxy-3-cyclohexene-1-carboxylate synthase">
    <location>
        <begin position="1"/>
        <end position="556"/>
    </location>
</feature>
<protein>
    <recommendedName>
        <fullName evidence="1">2-succinyl-5-enolpyruvyl-6-hydroxy-3-cyclohexene-1-carboxylate synthase</fullName>
        <shortName evidence="1">SEPHCHC synthase</shortName>
        <ecNumber evidence="1">2.2.1.9</ecNumber>
    </recommendedName>
    <alternativeName>
        <fullName evidence="1">Menaquinone biosynthesis protein MenD</fullName>
    </alternativeName>
</protein>
<dbReference type="EC" id="2.2.1.9" evidence="1"/>
<dbReference type="EMBL" id="CP001113">
    <property type="protein sequence ID" value="ACF63707.1"/>
    <property type="molecule type" value="Genomic_DNA"/>
</dbReference>
<dbReference type="RefSeq" id="WP_000116392.1">
    <property type="nucleotide sequence ID" value="NZ_CCMR01000001.1"/>
</dbReference>
<dbReference type="SMR" id="B4SYY1"/>
<dbReference type="KEGG" id="see:SNSL254_A2494"/>
<dbReference type="HOGENOM" id="CLU_006051_3_0_6"/>
<dbReference type="UniPathway" id="UPA00079"/>
<dbReference type="UniPathway" id="UPA01057">
    <property type="reaction ID" value="UER00164"/>
</dbReference>
<dbReference type="Proteomes" id="UP000008824">
    <property type="component" value="Chromosome"/>
</dbReference>
<dbReference type="GO" id="GO:0070204">
    <property type="term" value="F:2-succinyl-5-enolpyruvyl-6-hydroxy-3-cyclohexene-1-carboxylic-acid synthase activity"/>
    <property type="evidence" value="ECO:0007669"/>
    <property type="project" value="UniProtKB-UniRule"/>
</dbReference>
<dbReference type="GO" id="GO:0000287">
    <property type="term" value="F:magnesium ion binding"/>
    <property type="evidence" value="ECO:0007669"/>
    <property type="project" value="UniProtKB-UniRule"/>
</dbReference>
<dbReference type="GO" id="GO:0030145">
    <property type="term" value="F:manganese ion binding"/>
    <property type="evidence" value="ECO:0007669"/>
    <property type="project" value="UniProtKB-UniRule"/>
</dbReference>
<dbReference type="GO" id="GO:0030976">
    <property type="term" value="F:thiamine pyrophosphate binding"/>
    <property type="evidence" value="ECO:0007669"/>
    <property type="project" value="UniProtKB-UniRule"/>
</dbReference>
<dbReference type="GO" id="GO:0009234">
    <property type="term" value="P:menaquinone biosynthetic process"/>
    <property type="evidence" value="ECO:0007669"/>
    <property type="project" value="UniProtKB-UniRule"/>
</dbReference>
<dbReference type="CDD" id="cd07037">
    <property type="entry name" value="TPP_PYR_MenD"/>
    <property type="match status" value="1"/>
</dbReference>
<dbReference type="CDD" id="cd02009">
    <property type="entry name" value="TPP_SHCHC_synthase"/>
    <property type="match status" value="1"/>
</dbReference>
<dbReference type="FunFam" id="3.40.50.1220:FF:000010">
    <property type="entry name" value="2-succinyl-5-enolpyruvyl-6-hydroxy-3-cyclohexene-1-carboxylate synthase"/>
    <property type="match status" value="1"/>
</dbReference>
<dbReference type="FunFam" id="3.40.50.970:FF:000029">
    <property type="entry name" value="2-succinyl-5-enolpyruvyl-6-hydroxy-3-cyclohexene-1-carboxylate synthase"/>
    <property type="match status" value="1"/>
</dbReference>
<dbReference type="Gene3D" id="3.40.50.970">
    <property type="match status" value="2"/>
</dbReference>
<dbReference type="Gene3D" id="3.40.50.1220">
    <property type="entry name" value="TPP-binding domain"/>
    <property type="match status" value="1"/>
</dbReference>
<dbReference type="HAMAP" id="MF_01659">
    <property type="entry name" value="MenD"/>
    <property type="match status" value="1"/>
</dbReference>
<dbReference type="InterPro" id="IPR004433">
    <property type="entry name" value="MenaQ_synth_MenD"/>
</dbReference>
<dbReference type="InterPro" id="IPR032264">
    <property type="entry name" value="MenD_middle"/>
</dbReference>
<dbReference type="InterPro" id="IPR029061">
    <property type="entry name" value="THDP-binding"/>
</dbReference>
<dbReference type="InterPro" id="IPR012001">
    <property type="entry name" value="Thiamin_PyroP_enz_TPP-bd_dom"/>
</dbReference>
<dbReference type="InterPro" id="IPR011766">
    <property type="entry name" value="TPP_enzyme_TPP-bd"/>
</dbReference>
<dbReference type="NCBIfam" id="TIGR00173">
    <property type="entry name" value="menD"/>
    <property type="match status" value="1"/>
</dbReference>
<dbReference type="PANTHER" id="PTHR42916">
    <property type="entry name" value="2-SUCCINYL-5-ENOLPYRUVYL-6-HYDROXY-3-CYCLOHEXENE-1-CARBOXYLATE SYNTHASE"/>
    <property type="match status" value="1"/>
</dbReference>
<dbReference type="PANTHER" id="PTHR42916:SF1">
    <property type="entry name" value="PROTEIN PHYLLO, CHLOROPLASTIC"/>
    <property type="match status" value="1"/>
</dbReference>
<dbReference type="Pfam" id="PF02775">
    <property type="entry name" value="TPP_enzyme_C"/>
    <property type="match status" value="1"/>
</dbReference>
<dbReference type="Pfam" id="PF16582">
    <property type="entry name" value="TPP_enzyme_M_2"/>
    <property type="match status" value="1"/>
</dbReference>
<dbReference type="Pfam" id="PF02776">
    <property type="entry name" value="TPP_enzyme_N"/>
    <property type="match status" value="1"/>
</dbReference>
<dbReference type="PIRSF" id="PIRSF004983">
    <property type="entry name" value="MenD"/>
    <property type="match status" value="1"/>
</dbReference>
<dbReference type="SUPFAM" id="SSF52518">
    <property type="entry name" value="Thiamin diphosphate-binding fold (THDP-binding)"/>
    <property type="match status" value="2"/>
</dbReference>
<accession>B4SYY1</accession>
<comment type="function">
    <text evidence="1">Catalyzes the thiamine diphosphate-dependent decarboxylation of 2-oxoglutarate and the subsequent addition of the resulting succinic semialdehyde-thiamine pyrophosphate anion to isochorismate to yield 2-succinyl-5-enolpyruvyl-6-hydroxy-3-cyclohexene-1-carboxylate (SEPHCHC).</text>
</comment>
<comment type="catalytic activity">
    <reaction evidence="1">
        <text>isochorismate + 2-oxoglutarate + H(+) = 5-enolpyruvoyl-6-hydroxy-2-succinyl-cyclohex-3-ene-1-carboxylate + CO2</text>
        <dbReference type="Rhea" id="RHEA:25593"/>
        <dbReference type="ChEBI" id="CHEBI:15378"/>
        <dbReference type="ChEBI" id="CHEBI:16526"/>
        <dbReference type="ChEBI" id="CHEBI:16810"/>
        <dbReference type="ChEBI" id="CHEBI:29780"/>
        <dbReference type="ChEBI" id="CHEBI:58818"/>
        <dbReference type="EC" id="2.2.1.9"/>
    </reaction>
</comment>
<comment type="cofactor">
    <cofactor evidence="1">
        <name>Mg(2+)</name>
        <dbReference type="ChEBI" id="CHEBI:18420"/>
    </cofactor>
    <cofactor evidence="1">
        <name>Mn(2+)</name>
        <dbReference type="ChEBI" id="CHEBI:29035"/>
    </cofactor>
</comment>
<comment type="cofactor">
    <cofactor evidence="1">
        <name>thiamine diphosphate</name>
        <dbReference type="ChEBI" id="CHEBI:58937"/>
    </cofactor>
    <text evidence="1">Binds 1 thiamine pyrophosphate per subunit.</text>
</comment>
<comment type="pathway">
    <text evidence="1">Quinol/quinone metabolism; 1,4-dihydroxy-2-naphthoate biosynthesis; 1,4-dihydroxy-2-naphthoate from chorismate: step 2/7.</text>
</comment>
<comment type="pathway">
    <text evidence="1">Quinol/quinone metabolism; menaquinone biosynthesis.</text>
</comment>
<comment type="subunit">
    <text evidence="1">Homodimer.</text>
</comment>
<comment type="similarity">
    <text evidence="1">Belongs to the TPP enzyme family. MenD subfamily.</text>
</comment>
<organism>
    <name type="scientific">Salmonella newport (strain SL254)</name>
    <dbReference type="NCBI Taxonomy" id="423368"/>
    <lineage>
        <taxon>Bacteria</taxon>
        <taxon>Pseudomonadati</taxon>
        <taxon>Pseudomonadota</taxon>
        <taxon>Gammaproteobacteria</taxon>
        <taxon>Enterobacterales</taxon>
        <taxon>Enterobacteriaceae</taxon>
        <taxon>Salmonella</taxon>
    </lineage>
</organism>
<name>MEND_SALNS</name>
<sequence>MSVSAFNRRWAAVILEALTRHGVRHVCIAPGSRSTPLTLAAAENPAFIHHTHFDERGLGHLALGLAKVSQQPVAVIVTSGTAVANLYPALIEAGLTGEKLILLTADRPPELIDCGANQAIRQAGMFASHPSQTLSLPRPTQDIPARWLVSTIDNALAMLHAGALHINCPFAEPLYGDMNDTGLVWQQRLGDWWQDEKPWLREARRLESDKQRDWFFWRQKRGVVVAGRMSAEEGKKVAQWAQTLGWPLIGDVLSQTGQPLPCADLWLGNAKAVTELQQAQIVVQLGSSLTGKRLLQWQATCEPEEYWVIDNIEGRLDPAHHRGRRLVAKIADWLELHPAEKRKPWCVEIPRLAELAWQRVVAQRDTFGEAQLAHRIRDYLPEQGQLFVGNSLVVRLIDALSQLPAGYPVYSNRGASGIDGLLSTAAGVQRASAKSTLAIVGDLSALYDLNALALLRQVSAPFVLIVVNNNGGQIFSLLPTPQSKRERFYLMPQNVHFDHAAAMFNLRYHRPENWEELESALAGAWRTPATTVIELVVNDTDGAQTLQQLLAQVSHL</sequence>